<comment type="cofactor">
    <cofactor evidence="1">
        <name>Zn(2+)</name>
        <dbReference type="ChEBI" id="CHEBI:29105"/>
    </cofactor>
    <text evidence="1">Binds 1 zinc ion.</text>
</comment>
<comment type="subcellular location">
    <subcellularLocation>
        <location evidence="1">Cytoplasm</location>
    </subcellularLocation>
</comment>
<comment type="similarity">
    <text evidence="1">Belongs to the SprT family.</text>
</comment>
<sequence length="156" mass="18300">MQVQRQLKRDLDKANRYFNKHFTPPTVSYTVRGRKAGVAYLQQNEIRLNPILLSENSSNFVQQVVPHELAHLLVYQQFGQVQPHGKEWKMMMKEVLGVPAETYHCFDVTNVAGQQFPYRCGCQTHFLSIRRHNAIMQHKRSYICKKCKEILVLKVK</sequence>
<reference key="1">
    <citation type="journal article" date="2009" name="J. Bacteriol.">
        <title>Complete genome sequence of Haemophilus parasuis SH0165.</title>
        <authorList>
            <person name="Yue M."/>
            <person name="Yang F."/>
            <person name="Yang J."/>
            <person name="Bei W."/>
            <person name="Cai X."/>
            <person name="Chen L."/>
            <person name="Dong J."/>
            <person name="Zhou R."/>
            <person name="Jin M."/>
            <person name="Jin Q."/>
            <person name="Chen H."/>
        </authorList>
    </citation>
    <scope>NUCLEOTIDE SEQUENCE [LARGE SCALE GENOMIC DNA]</scope>
    <source>
        <strain>SH0165</strain>
    </source>
</reference>
<gene>
    <name evidence="1" type="primary">sprT</name>
    <name type="ordered locus">HAPS_1347</name>
</gene>
<name>SPRT_GLAP5</name>
<protein>
    <recommendedName>
        <fullName evidence="1">Protein SprT</fullName>
    </recommendedName>
</protein>
<proteinExistence type="inferred from homology"/>
<feature type="chain" id="PRO_1000148334" description="Protein SprT">
    <location>
        <begin position="1"/>
        <end position="156"/>
    </location>
</feature>
<feature type="domain" description="SprT-like" evidence="1">
    <location>
        <begin position="15"/>
        <end position="153"/>
    </location>
</feature>
<feature type="active site" evidence="1">
    <location>
        <position position="68"/>
    </location>
</feature>
<feature type="binding site" evidence="1">
    <location>
        <position position="67"/>
    </location>
    <ligand>
        <name>Zn(2+)</name>
        <dbReference type="ChEBI" id="CHEBI:29105"/>
    </ligand>
</feature>
<feature type="binding site" evidence="1">
    <location>
        <position position="71"/>
    </location>
    <ligand>
        <name>Zn(2+)</name>
        <dbReference type="ChEBI" id="CHEBI:29105"/>
    </ligand>
</feature>
<evidence type="ECO:0000255" key="1">
    <source>
        <dbReference type="HAMAP-Rule" id="MF_00746"/>
    </source>
</evidence>
<dbReference type="EMBL" id="CP001321">
    <property type="protein sequence ID" value="ACL32927.1"/>
    <property type="molecule type" value="Genomic_DNA"/>
</dbReference>
<dbReference type="RefSeq" id="WP_015939736.1">
    <property type="nucleotide sequence ID" value="NC_011852.1"/>
</dbReference>
<dbReference type="SMR" id="B8F6H5"/>
<dbReference type="STRING" id="557723.HAPS_1347"/>
<dbReference type="KEGG" id="hap:HAPS_1347"/>
<dbReference type="HOGENOM" id="CLU_113336_0_1_6"/>
<dbReference type="Proteomes" id="UP000006743">
    <property type="component" value="Chromosome"/>
</dbReference>
<dbReference type="GO" id="GO:0005737">
    <property type="term" value="C:cytoplasm"/>
    <property type="evidence" value="ECO:0007669"/>
    <property type="project" value="UniProtKB-SubCell"/>
</dbReference>
<dbReference type="GO" id="GO:0008270">
    <property type="term" value="F:zinc ion binding"/>
    <property type="evidence" value="ECO:0007669"/>
    <property type="project" value="UniProtKB-UniRule"/>
</dbReference>
<dbReference type="GO" id="GO:0006950">
    <property type="term" value="P:response to stress"/>
    <property type="evidence" value="ECO:0007669"/>
    <property type="project" value="UniProtKB-ARBA"/>
</dbReference>
<dbReference type="Gene3D" id="3.30.2010.10">
    <property type="entry name" value="Metalloproteases ('zincins'), catalytic domain"/>
    <property type="match status" value="1"/>
</dbReference>
<dbReference type="HAMAP" id="MF_00746">
    <property type="entry name" value="SprT"/>
    <property type="match status" value="1"/>
</dbReference>
<dbReference type="InterPro" id="IPR006640">
    <property type="entry name" value="SprT-like_domain"/>
</dbReference>
<dbReference type="InterPro" id="IPR035240">
    <property type="entry name" value="SprT_Zn_ribbon"/>
</dbReference>
<dbReference type="InterPro" id="IPR023483">
    <property type="entry name" value="Uncharacterised_SprT"/>
</dbReference>
<dbReference type="NCBIfam" id="NF003421">
    <property type="entry name" value="PRK04860.1"/>
    <property type="match status" value="1"/>
</dbReference>
<dbReference type="PANTHER" id="PTHR38773">
    <property type="entry name" value="PROTEIN SPRT"/>
    <property type="match status" value="1"/>
</dbReference>
<dbReference type="PANTHER" id="PTHR38773:SF1">
    <property type="entry name" value="PROTEIN SPRT"/>
    <property type="match status" value="1"/>
</dbReference>
<dbReference type="Pfam" id="PF10263">
    <property type="entry name" value="SprT-like"/>
    <property type="match status" value="1"/>
</dbReference>
<dbReference type="Pfam" id="PF17283">
    <property type="entry name" value="Zn_ribbon_SprT"/>
    <property type="match status" value="1"/>
</dbReference>
<dbReference type="SMART" id="SM00731">
    <property type="entry name" value="SprT"/>
    <property type="match status" value="1"/>
</dbReference>
<dbReference type="PROSITE" id="PS00142">
    <property type="entry name" value="ZINC_PROTEASE"/>
    <property type="match status" value="1"/>
</dbReference>
<accession>B8F6H5</accession>
<keyword id="KW-0963">Cytoplasm</keyword>
<keyword id="KW-0479">Metal-binding</keyword>
<keyword id="KW-1185">Reference proteome</keyword>
<keyword id="KW-0862">Zinc</keyword>
<organism>
    <name type="scientific">Glaesserella parasuis serovar 5 (strain SH0165)</name>
    <name type="common">Haemophilus parasuis</name>
    <dbReference type="NCBI Taxonomy" id="557723"/>
    <lineage>
        <taxon>Bacteria</taxon>
        <taxon>Pseudomonadati</taxon>
        <taxon>Pseudomonadota</taxon>
        <taxon>Gammaproteobacteria</taxon>
        <taxon>Pasteurellales</taxon>
        <taxon>Pasteurellaceae</taxon>
        <taxon>Glaesserella</taxon>
    </lineage>
</organism>